<reference key="1">
    <citation type="submission" date="2005-09" db="EMBL/GenBank/DDBJ databases">
        <authorList>
            <person name="Glass J.I."/>
            <person name="Lartigue C."/>
            <person name="Pfannkoch C."/>
            <person name="Baden-Tillson H."/>
            <person name="Smith H.O."/>
            <person name="Venter J.C."/>
            <person name="Roske K."/>
            <person name="Wise K.S."/>
            <person name="Calcutt M.J."/>
            <person name="Nelson W.C."/>
            <person name="Nierman W.C."/>
        </authorList>
    </citation>
    <scope>NUCLEOTIDE SEQUENCE [LARGE SCALE GENOMIC DNA]</scope>
    <source>
        <strain>California kid / ATCC 27343 / NCTC 10154</strain>
    </source>
</reference>
<accession>Q2SRA2</accession>
<gene>
    <name evidence="2" type="primary">trmB</name>
    <name type="ordered locus">MCAP_0761</name>
</gene>
<proteinExistence type="inferred from homology"/>
<comment type="function">
    <text evidence="2">Catalyzes the formation of N(7)-methylguanine at position 46 (m7G46) in tRNA.</text>
</comment>
<comment type="catalytic activity">
    <reaction evidence="2">
        <text>guanosine(46) in tRNA + S-adenosyl-L-methionine = N(7)-methylguanosine(46) in tRNA + S-adenosyl-L-homocysteine</text>
        <dbReference type="Rhea" id="RHEA:42708"/>
        <dbReference type="Rhea" id="RHEA-COMP:10188"/>
        <dbReference type="Rhea" id="RHEA-COMP:10189"/>
        <dbReference type="ChEBI" id="CHEBI:57856"/>
        <dbReference type="ChEBI" id="CHEBI:59789"/>
        <dbReference type="ChEBI" id="CHEBI:74269"/>
        <dbReference type="ChEBI" id="CHEBI:74480"/>
        <dbReference type="EC" id="2.1.1.33"/>
    </reaction>
</comment>
<comment type="pathway">
    <text evidence="2">tRNA modification; N(7)-methylguanine-tRNA biosynthesis.</text>
</comment>
<comment type="similarity">
    <text evidence="2">Belongs to the class I-like SAM-binding methyltransferase superfamily. TrmB family.</text>
</comment>
<evidence type="ECO:0000250" key="1"/>
<evidence type="ECO:0000255" key="2">
    <source>
        <dbReference type="HAMAP-Rule" id="MF_01057"/>
    </source>
</evidence>
<protein>
    <recommendedName>
        <fullName evidence="2">tRNA (guanine-N(7)-)-methyltransferase</fullName>
        <ecNumber evidence="2">2.1.1.33</ecNumber>
    </recommendedName>
    <alternativeName>
        <fullName evidence="2">tRNA (guanine(46)-N(7))-methyltransferase</fullName>
    </alternativeName>
    <alternativeName>
        <fullName evidence="2">tRNA(m7G46)-methyltransferase</fullName>
    </alternativeName>
</protein>
<sequence length="220" mass="26151">MRLRKKAWTNEFLNQHTYYLIKYDKKINLNEIFLNNNPTCLEIGCGKGQFLTTLALKNPNLNYIGMEKSSTITAIGLKKSLKEFQNNSKKMTNIKYLNKYAENLLEIFYTDSFSRIYLNFSDPWPKARHYKKRLTYLGFLDIYSDILIKNGFLEFKTDNDSLYNFTLEQLKLTNKWEIISNTLDLYNDQELLKDNVPTEYETKFHLANKNIYKIVIKNLK</sequence>
<feature type="chain" id="PRO_0000229173" description="tRNA (guanine-N(7)-)-methyltransferase">
    <location>
        <begin position="1"/>
        <end position="220"/>
    </location>
</feature>
<feature type="active site" evidence="1">
    <location>
        <position position="122"/>
    </location>
</feature>
<feature type="binding site" evidence="2">
    <location>
        <position position="42"/>
    </location>
    <ligand>
        <name>S-adenosyl-L-methionine</name>
        <dbReference type="ChEBI" id="CHEBI:59789"/>
    </ligand>
</feature>
<feature type="binding site" evidence="2">
    <location>
        <position position="67"/>
    </location>
    <ligand>
        <name>S-adenosyl-L-methionine</name>
        <dbReference type="ChEBI" id="CHEBI:59789"/>
    </ligand>
</feature>
<feature type="binding site" evidence="2">
    <location>
        <position position="122"/>
    </location>
    <ligand>
        <name>S-adenosyl-L-methionine</name>
        <dbReference type="ChEBI" id="CHEBI:59789"/>
    </ligand>
</feature>
<feature type="binding site" evidence="2">
    <location>
        <position position="126"/>
    </location>
    <ligand>
        <name>substrate</name>
    </ligand>
</feature>
<feature type="binding site" evidence="2">
    <location>
        <position position="158"/>
    </location>
    <ligand>
        <name>substrate</name>
    </ligand>
</feature>
<feature type="binding site" evidence="2">
    <location>
        <begin position="198"/>
        <end position="201"/>
    </location>
    <ligand>
        <name>substrate</name>
    </ligand>
</feature>
<dbReference type="EC" id="2.1.1.33" evidence="2"/>
<dbReference type="EMBL" id="CP000123">
    <property type="protein sequence ID" value="ABC01304.1"/>
    <property type="molecule type" value="Genomic_DNA"/>
</dbReference>
<dbReference type="RefSeq" id="WP_011387595.1">
    <property type="nucleotide sequence ID" value="NC_007633.1"/>
</dbReference>
<dbReference type="SMR" id="Q2SRA2"/>
<dbReference type="GeneID" id="23778286"/>
<dbReference type="KEGG" id="mcp:MCAP_0761"/>
<dbReference type="HOGENOM" id="CLU_050910_2_1_14"/>
<dbReference type="PhylomeDB" id="Q2SRA2"/>
<dbReference type="UniPathway" id="UPA00989"/>
<dbReference type="Proteomes" id="UP000001928">
    <property type="component" value="Chromosome"/>
</dbReference>
<dbReference type="GO" id="GO:0043527">
    <property type="term" value="C:tRNA methyltransferase complex"/>
    <property type="evidence" value="ECO:0007669"/>
    <property type="project" value="TreeGrafter"/>
</dbReference>
<dbReference type="GO" id="GO:0008176">
    <property type="term" value="F:tRNA (guanine(46)-N7)-methyltransferase activity"/>
    <property type="evidence" value="ECO:0007669"/>
    <property type="project" value="UniProtKB-UniRule"/>
</dbReference>
<dbReference type="Gene3D" id="3.40.50.150">
    <property type="entry name" value="Vaccinia Virus protein VP39"/>
    <property type="match status" value="1"/>
</dbReference>
<dbReference type="HAMAP" id="MF_01057">
    <property type="entry name" value="tRNA_methyltr_TrmB"/>
    <property type="match status" value="1"/>
</dbReference>
<dbReference type="InterPro" id="IPR029063">
    <property type="entry name" value="SAM-dependent_MTases_sf"/>
</dbReference>
<dbReference type="InterPro" id="IPR003358">
    <property type="entry name" value="tRNA_(Gua-N-7)_MeTrfase_Trmb"/>
</dbReference>
<dbReference type="InterPro" id="IPR055361">
    <property type="entry name" value="tRNA_methyltr_TrmB_bact"/>
</dbReference>
<dbReference type="NCBIfam" id="NF001080">
    <property type="entry name" value="PRK00121.2-2"/>
    <property type="match status" value="1"/>
</dbReference>
<dbReference type="NCBIfam" id="TIGR00091">
    <property type="entry name" value="tRNA (guanosine(46)-N7)-methyltransferase TrmB"/>
    <property type="match status" value="1"/>
</dbReference>
<dbReference type="PANTHER" id="PTHR23417">
    <property type="entry name" value="3-DEOXY-D-MANNO-OCTULOSONIC-ACID TRANSFERASE/TRNA GUANINE-N 7 - -METHYLTRANSFERASE"/>
    <property type="match status" value="1"/>
</dbReference>
<dbReference type="PANTHER" id="PTHR23417:SF14">
    <property type="entry name" value="PENTACOTRIPEPTIDE-REPEAT REGION OF PRORP DOMAIN-CONTAINING PROTEIN"/>
    <property type="match status" value="1"/>
</dbReference>
<dbReference type="Pfam" id="PF02390">
    <property type="entry name" value="Methyltransf_4"/>
    <property type="match status" value="1"/>
</dbReference>
<dbReference type="SUPFAM" id="SSF53335">
    <property type="entry name" value="S-adenosyl-L-methionine-dependent methyltransferases"/>
    <property type="match status" value="1"/>
</dbReference>
<dbReference type="PROSITE" id="PS51625">
    <property type="entry name" value="SAM_MT_TRMB"/>
    <property type="match status" value="1"/>
</dbReference>
<keyword id="KW-0489">Methyltransferase</keyword>
<keyword id="KW-0949">S-adenosyl-L-methionine</keyword>
<keyword id="KW-0808">Transferase</keyword>
<keyword id="KW-0819">tRNA processing</keyword>
<organism>
    <name type="scientific">Mycoplasma capricolum subsp. capricolum (strain California kid / ATCC 27343 / NCTC 10154)</name>
    <dbReference type="NCBI Taxonomy" id="340047"/>
    <lineage>
        <taxon>Bacteria</taxon>
        <taxon>Bacillati</taxon>
        <taxon>Mycoplasmatota</taxon>
        <taxon>Mollicutes</taxon>
        <taxon>Mycoplasmataceae</taxon>
        <taxon>Mycoplasma</taxon>
    </lineage>
</organism>
<name>TRMB_MYCCT</name>